<feature type="chain" id="PRO_1000017463" description="Large ribosomal subunit protein bL27">
    <location>
        <begin position="1"/>
        <end position="87"/>
    </location>
</feature>
<protein>
    <recommendedName>
        <fullName evidence="1">Large ribosomal subunit protein bL27</fullName>
    </recommendedName>
    <alternativeName>
        <fullName evidence="2">50S ribosomal protein L27</fullName>
    </alternativeName>
</protein>
<keyword id="KW-0687">Ribonucleoprotein</keyword>
<keyword id="KW-0689">Ribosomal protein</keyword>
<reference key="1">
    <citation type="journal article" date="2009" name="BMC Genomics">
        <title>Metabolic analysis of the soil microbe Dechloromonas aromatica str. RCB: indications of a surprisingly complex life-style and cryptic anaerobic pathways for aromatic degradation.</title>
        <authorList>
            <person name="Salinero K.K."/>
            <person name="Keller K."/>
            <person name="Feil W.S."/>
            <person name="Feil H."/>
            <person name="Trong S."/>
            <person name="Di Bartolo G."/>
            <person name="Lapidus A."/>
        </authorList>
    </citation>
    <scope>NUCLEOTIDE SEQUENCE [LARGE SCALE GENOMIC DNA]</scope>
    <source>
        <strain>RCB</strain>
    </source>
</reference>
<proteinExistence type="inferred from homology"/>
<name>RL27_DECAR</name>
<accession>Q47AD1</accession>
<comment type="similarity">
    <text evidence="1">Belongs to the bacterial ribosomal protein bL27 family.</text>
</comment>
<organism>
    <name type="scientific">Dechloromonas aromatica (strain RCB)</name>
    <dbReference type="NCBI Taxonomy" id="159087"/>
    <lineage>
        <taxon>Bacteria</taxon>
        <taxon>Pseudomonadati</taxon>
        <taxon>Pseudomonadota</taxon>
        <taxon>Betaproteobacteria</taxon>
        <taxon>Rhodocyclales</taxon>
        <taxon>Azonexaceae</taxon>
        <taxon>Dechloromonas</taxon>
    </lineage>
</organism>
<dbReference type="EMBL" id="CP000089">
    <property type="protein sequence ID" value="AAZ48200.1"/>
    <property type="molecule type" value="Genomic_DNA"/>
</dbReference>
<dbReference type="SMR" id="Q47AD1"/>
<dbReference type="STRING" id="159087.Daro_3471"/>
<dbReference type="KEGG" id="dar:Daro_3471"/>
<dbReference type="eggNOG" id="COG0211">
    <property type="taxonomic scope" value="Bacteria"/>
</dbReference>
<dbReference type="HOGENOM" id="CLU_095424_4_0_4"/>
<dbReference type="OrthoDB" id="9803474at2"/>
<dbReference type="GO" id="GO:0022625">
    <property type="term" value="C:cytosolic large ribosomal subunit"/>
    <property type="evidence" value="ECO:0007669"/>
    <property type="project" value="TreeGrafter"/>
</dbReference>
<dbReference type="GO" id="GO:0003735">
    <property type="term" value="F:structural constituent of ribosome"/>
    <property type="evidence" value="ECO:0007669"/>
    <property type="project" value="InterPro"/>
</dbReference>
<dbReference type="GO" id="GO:0006412">
    <property type="term" value="P:translation"/>
    <property type="evidence" value="ECO:0007669"/>
    <property type="project" value="UniProtKB-UniRule"/>
</dbReference>
<dbReference type="FunFam" id="2.40.50.100:FF:000001">
    <property type="entry name" value="50S ribosomal protein L27"/>
    <property type="match status" value="1"/>
</dbReference>
<dbReference type="Gene3D" id="2.40.50.100">
    <property type="match status" value="1"/>
</dbReference>
<dbReference type="HAMAP" id="MF_00539">
    <property type="entry name" value="Ribosomal_bL27"/>
    <property type="match status" value="1"/>
</dbReference>
<dbReference type="InterPro" id="IPR001684">
    <property type="entry name" value="Ribosomal_bL27"/>
</dbReference>
<dbReference type="InterPro" id="IPR018261">
    <property type="entry name" value="Ribosomal_bL27_CS"/>
</dbReference>
<dbReference type="NCBIfam" id="TIGR00062">
    <property type="entry name" value="L27"/>
    <property type="match status" value="1"/>
</dbReference>
<dbReference type="PANTHER" id="PTHR15893:SF0">
    <property type="entry name" value="LARGE RIBOSOMAL SUBUNIT PROTEIN BL27M"/>
    <property type="match status" value="1"/>
</dbReference>
<dbReference type="PANTHER" id="PTHR15893">
    <property type="entry name" value="RIBOSOMAL PROTEIN L27"/>
    <property type="match status" value="1"/>
</dbReference>
<dbReference type="Pfam" id="PF01016">
    <property type="entry name" value="Ribosomal_L27"/>
    <property type="match status" value="1"/>
</dbReference>
<dbReference type="PRINTS" id="PR00063">
    <property type="entry name" value="RIBOSOMALL27"/>
</dbReference>
<dbReference type="SUPFAM" id="SSF110324">
    <property type="entry name" value="Ribosomal L27 protein-like"/>
    <property type="match status" value="1"/>
</dbReference>
<dbReference type="PROSITE" id="PS00831">
    <property type="entry name" value="RIBOSOMAL_L27"/>
    <property type="match status" value="1"/>
</dbReference>
<gene>
    <name evidence="1" type="primary">rpmA</name>
    <name type="ordered locus">Daro_3471</name>
</gene>
<sequence length="87" mass="9402">MAHKKAGGSSRNGRDSQAQRLGVKRYGGQFVLAGNIIVRQRGTEFHPGDNVGCGKDHTLFALKDGVIQFSIKGLKKRRVVTIVPAAE</sequence>
<evidence type="ECO:0000255" key="1">
    <source>
        <dbReference type="HAMAP-Rule" id="MF_00539"/>
    </source>
</evidence>
<evidence type="ECO:0000305" key="2"/>